<keyword id="KW-0687">Ribonucleoprotein</keyword>
<keyword id="KW-0689">Ribosomal protein</keyword>
<keyword id="KW-0694">RNA-binding</keyword>
<keyword id="KW-0699">rRNA-binding</keyword>
<sequence length="120" mass="13679">MLVNRRYTAKGKNLPASPKKVRPIADNIRGKSYVKAIAVLCSMPNKGAKLLEKVVKSAASNAMYHNKNLSEDMIFIKMVMVDDGRRRKKIWPRARGRADRLVNRNCHIFVEVDEKKDIKG</sequence>
<organism>
    <name type="scientific">Borreliella afzelii (strain PKo)</name>
    <name type="common">Borrelia afzelii</name>
    <dbReference type="NCBI Taxonomy" id="390236"/>
    <lineage>
        <taxon>Bacteria</taxon>
        <taxon>Pseudomonadati</taxon>
        <taxon>Spirochaetota</taxon>
        <taxon>Spirochaetia</taxon>
        <taxon>Spirochaetales</taxon>
        <taxon>Borreliaceae</taxon>
        <taxon>Borreliella</taxon>
    </lineage>
</organism>
<name>RL22_BORAP</name>
<dbReference type="EMBL" id="CP000395">
    <property type="protein sequence ID" value="ABH01754.1"/>
    <property type="molecule type" value="Genomic_DNA"/>
</dbReference>
<dbReference type="EMBL" id="CP002933">
    <property type="protein sequence ID" value="AEL69708.1"/>
    <property type="molecule type" value="Genomic_DNA"/>
</dbReference>
<dbReference type="RefSeq" id="WP_004789446.1">
    <property type="nucleotide sequence ID" value="NZ_CP160066.1"/>
</dbReference>
<dbReference type="SMR" id="Q0SN24"/>
<dbReference type="STRING" id="29518.BLA32_01845"/>
<dbReference type="GeneID" id="77265330"/>
<dbReference type="KEGG" id="baf:BAPKO_0511"/>
<dbReference type="KEGG" id="bafz:BafPKo_0500"/>
<dbReference type="PATRIC" id="fig|390236.22.peg.480"/>
<dbReference type="eggNOG" id="COG0091">
    <property type="taxonomic scope" value="Bacteria"/>
</dbReference>
<dbReference type="HOGENOM" id="CLU_083987_3_1_12"/>
<dbReference type="OrthoDB" id="9805969at2"/>
<dbReference type="Proteomes" id="UP000005216">
    <property type="component" value="Chromosome"/>
</dbReference>
<dbReference type="GO" id="GO:0022625">
    <property type="term" value="C:cytosolic large ribosomal subunit"/>
    <property type="evidence" value="ECO:0007669"/>
    <property type="project" value="TreeGrafter"/>
</dbReference>
<dbReference type="GO" id="GO:0019843">
    <property type="term" value="F:rRNA binding"/>
    <property type="evidence" value="ECO:0007669"/>
    <property type="project" value="UniProtKB-UniRule"/>
</dbReference>
<dbReference type="GO" id="GO:0003735">
    <property type="term" value="F:structural constituent of ribosome"/>
    <property type="evidence" value="ECO:0007669"/>
    <property type="project" value="InterPro"/>
</dbReference>
<dbReference type="GO" id="GO:0006412">
    <property type="term" value="P:translation"/>
    <property type="evidence" value="ECO:0007669"/>
    <property type="project" value="UniProtKB-UniRule"/>
</dbReference>
<dbReference type="CDD" id="cd00336">
    <property type="entry name" value="Ribosomal_L22"/>
    <property type="match status" value="1"/>
</dbReference>
<dbReference type="Gene3D" id="3.90.470.10">
    <property type="entry name" value="Ribosomal protein L22/L17"/>
    <property type="match status" value="1"/>
</dbReference>
<dbReference type="HAMAP" id="MF_01331_B">
    <property type="entry name" value="Ribosomal_uL22_B"/>
    <property type="match status" value="1"/>
</dbReference>
<dbReference type="InterPro" id="IPR001063">
    <property type="entry name" value="Ribosomal_uL22"/>
</dbReference>
<dbReference type="InterPro" id="IPR005727">
    <property type="entry name" value="Ribosomal_uL22_bac/chlpt-type"/>
</dbReference>
<dbReference type="InterPro" id="IPR047867">
    <property type="entry name" value="Ribosomal_uL22_bac/org-type"/>
</dbReference>
<dbReference type="InterPro" id="IPR018260">
    <property type="entry name" value="Ribosomal_uL22_CS"/>
</dbReference>
<dbReference type="InterPro" id="IPR036394">
    <property type="entry name" value="Ribosomal_uL22_sf"/>
</dbReference>
<dbReference type="NCBIfam" id="TIGR01044">
    <property type="entry name" value="rplV_bact"/>
    <property type="match status" value="1"/>
</dbReference>
<dbReference type="PANTHER" id="PTHR13501">
    <property type="entry name" value="CHLOROPLAST 50S RIBOSOMAL PROTEIN L22-RELATED"/>
    <property type="match status" value="1"/>
</dbReference>
<dbReference type="PANTHER" id="PTHR13501:SF8">
    <property type="entry name" value="LARGE RIBOSOMAL SUBUNIT PROTEIN UL22M"/>
    <property type="match status" value="1"/>
</dbReference>
<dbReference type="Pfam" id="PF00237">
    <property type="entry name" value="Ribosomal_L22"/>
    <property type="match status" value="1"/>
</dbReference>
<dbReference type="SUPFAM" id="SSF54843">
    <property type="entry name" value="Ribosomal protein L22"/>
    <property type="match status" value="1"/>
</dbReference>
<dbReference type="PROSITE" id="PS00464">
    <property type="entry name" value="RIBOSOMAL_L22"/>
    <property type="match status" value="1"/>
</dbReference>
<reference key="1">
    <citation type="journal article" date="2006" name="BMC Genomics">
        <title>Comparative genome analysis: selection pressure on the Borrelia vls cassettes is essential for infectivity.</title>
        <authorList>
            <person name="Gloeckner G."/>
            <person name="Schulte-Spechtel U."/>
            <person name="Schilhabel M."/>
            <person name="Felder M."/>
            <person name="Suehnel J."/>
            <person name="Wilske B."/>
            <person name="Platzer M."/>
        </authorList>
    </citation>
    <scope>NUCLEOTIDE SEQUENCE [LARGE SCALE GENOMIC DNA]</scope>
    <source>
        <strain>PKo</strain>
    </source>
</reference>
<reference key="2">
    <citation type="journal article" date="2011" name="J. Bacteriol.">
        <title>Whole-genome sequences of two Borrelia afzelii and two Borrelia garinii Lyme disease agent isolates.</title>
        <authorList>
            <person name="Casjens S.R."/>
            <person name="Mongodin E.F."/>
            <person name="Qiu W.G."/>
            <person name="Dunn J.J."/>
            <person name="Luft B.J."/>
            <person name="Fraser-Liggett C.M."/>
            <person name="Schutzer S.E."/>
        </authorList>
    </citation>
    <scope>NUCLEOTIDE SEQUENCE [LARGE SCALE GENOMIC DNA]</scope>
    <source>
        <strain>PKo</strain>
    </source>
</reference>
<gene>
    <name evidence="1" type="primary">rplV</name>
    <name type="ordered locus">BAPKO_0511</name>
    <name type="ordered locus">BafPKo_0500</name>
</gene>
<protein>
    <recommendedName>
        <fullName evidence="1">Large ribosomal subunit protein uL22</fullName>
    </recommendedName>
    <alternativeName>
        <fullName evidence="2">50S ribosomal protein L22</fullName>
    </alternativeName>
</protein>
<feature type="chain" id="PRO_0000354446" description="Large ribosomal subunit protein uL22">
    <location>
        <begin position="1"/>
        <end position="120"/>
    </location>
</feature>
<comment type="function">
    <text evidence="1">This protein binds specifically to 23S rRNA; its binding is stimulated by other ribosomal proteins, e.g. L4, L17, and L20. It is important during the early stages of 50S assembly. It makes multiple contacts with different domains of the 23S rRNA in the assembled 50S subunit and ribosome (By similarity).</text>
</comment>
<comment type="function">
    <text evidence="1">The globular domain of the protein is located near the polypeptide exit tunnel on the outside of the subunit, while an extended beta-hairpin is found that lines the wall of the exit tunnel in the center of the 70S ribosome.</text>
</comment>
<comment type="subunit">
    <text evidence="1">Part of the 50S ribosomal subunit.</text>
</comment>
<comment type="similarity">
    <text evidence="1">Belongs to the universal ribosomal protein uL22 family.</text>
</comment>
<proteinExistence type="inferred from homology"/>
<evidence type="ECO:0000255" key="1">
    <source>
        <dbReference type="HAMAP-Rule" id="MF_01331"/>
    </source>
</evidence>
<evidence type="ECO:0000305" key="2"/>
<accession>Q0SN24</accession>
<accession>G0ISC7</accession>